<protein>
    <recommendedName>
        <fullName evidence="1">Formate-dependent phosphoribosylglycinamide formyltransferase</fullName>
        <ecNumber evidence="1">6.3.1.21</ecNumber>
    </recommendedName>
    <alternativeName>
        <fullName evidence="1">5'-phosphoribosylglycinamide transformylase 2</fullName>
    </alternativeName>
    <alternativeName>
        <fullName evidence="1">Formate-dependent GAR transformylase</fullName>
    </alternativeName>
    <alternativeName>
        <fullName evidence="1">GAR transformylase 2</fullName>
        <shortName evidence="1">GART 2</shortName>
    </alternativeName>
    <alternativeName>
        <fullName evidence="1">Non-folate glycinamide ribonucleotide transformylase</fullName>
    </alternativeName>
    <alternativeName>
        <fullName evidence="1">Phosphoribosylglycinamide formyltransferase 2</fullName>
    </alternativeName>
</protein>
<reference key="1">
    <citation type="journal article" date="1995" name="J. Bacteriol.">
        <title>Genetic structure of the dnaA region of the cyanobacterium Synechocystis sp. strain PCC6803.</title>
        <authorList>
            <person name="Richter S."/>
            <person name="Messer W."/>
        </authorList>
    </citation>
    <scope>NUCLEOTIDE SEQUENCE [GENOMIC DNA]</scope>
</reference>
<reference key="2">
    <citation type="journal article" date="1996" name="DNA Res.">
        <title>Sequence analysis of the genome of the unicellular cyanobacterium Synechocystis sp. strain PCC6803. II. Sequence determination of the entire genome and assignment of potential protein-coding regions.</title>
        <authorList>
            <person name="Kaneko T."/>
            <person name="Sato S."/>
            <person name="Kotani H."/>
            <person name="Tanaka A."/>
            <person name="Asamizu E."/>
            <person name="Nakamura Y."/>
            <person name="Miyajima N."/>
            <person name="Hirosawa M."/>
            <person name="Sugiura M."/>
            <person name="Sasamoto S."/>
            <person name="Kimura T."/>
            <person name="Hosouchi T."/>
            <person name="Matsuno A."/>
            <person name="Muraki A."/>
            <person name="Nakazaki N."/>
            <person name="Naruo K."/>
            <person name="Okumura S."/>
            <person name="Shimpo S."/>
            <person name="Takeuchi C."/>
            <person name="Wada T."/>
            <person name="Watanabe A."/>
            <person name="Yamada M."/>
            <person name="Yasuda M."/>
            <person name="Tabata S."/>
        </authorList>
    </citation>
    <scope>NUCLEOTIDE SEQUENCE [LARGE SCALE GENOMIC DNA]</scope>
    <source>
        <strain>ATCC 27184 / PCC 6803 / Kazusa</strain>
    </source>
</reference>
<gene>
    <name evidence="1" type="primary">purT</name>
    <name type="ordered locus">slr0861</name>
</gene>
<sequence>MANPVTLPQTFLLLGSGELGKEFTIAAQRLGNRVIAVDRYPDAPAMQVAQVAEVISMLDGNALEAVVKKYQPDWIVPEVEAIRTEKLLELEAGGYRVIPTAQATNLTMNRDRIRELAAQQLGVRTARYNYATSLAELEEVSQAIGFPNVVKPVMSSSGKGQSVVNNAGEVQQAWSAAIAGARGDQTKVIVEEFIPFELEITLLTIRQWQGETLFCDPIGHRQERGDYQESWQPAPLTQRQLAQAQAIAKTVTDALGGAGIFGVEFFITPEEVIFSELSPRPHDTGMVTLISQNLNEFELHLRAILGLPIPQIKQTGPAASAVILALEAGEKLSYAGLAEALTESGTDVRLFGKPNARPHRRLGVALAQAESVDAARRLAQTVAEKVIVQTE</sequence>
<keyword id="KW-0067">ATP-binding</keyword>
<keyword id="KW-0436">Ligase</keyword>
<keyword id="KW-0460">Magnesium</keyword>
<keyword id="KW-0479">Metal-binding</keyword>
<keyword id="KW-0547">Nucleotide-binding</keyword>
<keyword id="KW-0658">Purine biosynthesis</keyword>
<keyword id="KW-1185">Reference proteome</keyword>
<dbReference type="EC" id="6.3.1.21" evidence="1"/>
<dbReference type="EMBL" id="L36958">
    <property type="protein sequence ID" value="AAA85911.1"/>
    <property type="molecule type" value="Genomic_DNA"/>
</dbReference>
<dbReference type="EMBL" id="BA000022">
    <property type="protein sequence ID" value="BAA17803.1"/>
    <property type="molecule type" value="Genomic_DNA"/>
</dbReference>
<dbReference type="PIR" id="S74842">
    <property type="entry name" value="S74842"/>
</dbReference>
<dbReference type="SMR" id="Q55336"/>
<dbReference type="FunCoup" id="Q55336">
    <property type="interactions" value="55"/>
</dbReference>
<dbReference type="IntAct" id="Q55336">
    <property type="interactions" value="4"/>
</dbReference>
<dbReference type="STRING" id="1148.gene:10498671"/>
<dbReference type="PaxDb" id="1148-1652885"/>
<dbReference type="EnsemblBacteria" id="BAA17803">
    <property type="protein sequence ID" value="BAA17803"/>
    <property type="gene ID" value="BAA17803"/>
</dbReference>
<dbReference type="KEGG" id="syn:slr0861"/>
<dbReference type="eggNOG" id="COG0027">
    <property type="taxonomic scope" value="Bacteria"/>
</dbReference>
<dbReference type="InParanoid" id="Q55336"/>
<dbReference type="PhylomeDB" id="Q55336"/>
<dbReference type="UniPathway" id="UPA00074">
    <property type="reaction ID" value="UER00127"/>
</dbReference>
<dbReference type="Proteomes" id="UP000001425">
    <property type="component" value="Chromosome"/>
</dbReference>
<dbReference type="GO" id="GO:0005829">
    <property type="term" value="C:cytosol"/>
    <property type="evidence" value="ECO:0000318"/>
    <property type="project" value="GO_Central"/>
</dbReference>
<dbReference type="GO" id="GO:0005524">
    <property type="term" value="F:ATP binding"/>
    <property type="evidence" value="ECO:0007669"/>
    <property type="project" value="UniProtKB-UniRule"/>
</dbReference>
<dbReference type="GO" id="GO:0000287">
    <property type="term" value="F:magnesium ion binding"/>
    <property type="evidence" value="ECO:0007669"/>
    <property type="project" value="InterPro"/>
</dbReference>
<dbReference type="GO" id="GO:0043815">
    <property type="term" value="F:phosphoribosylglycinamide formyltransferase 2 activity"/>
    <property type="evidence" value="ECO:0007669"/>
    <property type="project" value="UniProtKB-UniRule"/>
</dbReference>
<dbReference type="GO" id="GO:0004644">
    <property type="term" value="F:phosphoribosylglycinamide formyltransferase activity"/>
    <property type="evidence" value="ECO:0007669"/>
    <property type="project" value="InterPro"/>
</dbReference>
<dbReference type="GO" id="GO:0006189">
    <property type="term" value="P:'de novo' IMP biosynthetic process"/>
    <property type="evidence" value="ECO:0007669"/>
    <property type="project" value="UniProtKB-UniRule"/>
</dbReference>
<dbReference type="FunFam" id="3.40.50.20:FF:000022">
    <property type="entry name" value="Formate-dependent phosphoribosylglycinamide formyltransferase"/>
    <property type="match status" value="1"/>
</dbReference>
<dbReference type="Gene3D" id="3.40.50.20">
    <property type="match status" value="1"/>
</dbReference>
<dbReference type="Gene3D" id="3.30.1490.20">
    <property type="entry name" value="ATP-grasp fold, A domain"/>
    <property type="match status" value="1"/>
</dbReference>
<dbReference type="Gene3D" id="3.30.470.20">
    <property type="entry name" value="ATP-grasp fold, B domain"/>
    <property type="match status" value="1"/>
</dbReference>
<dbReference type="HAMAP" id="MF_01643">
    <property type="entry name" value="PurT"/>
    <property type="match status" value="1"/>
</dbReference>
<dbReference type="InterPro" id="IPR011761">
    <property type="entry name" value="ATP-grasp"/>
</dbReference>
<dbReference type="InterPro" id="IPR003135">
    <property type="entry name" value="ATP-grasp_carboxylate-amine"/>
</dbReference>
<dbReference type="InterPro" id="IPR013815">
    <property type="entry name" value="ATP_grasp_subdomain_1"/>
</dbReference>
<dbReference type="InterPro" id="IPR016185">
    <property type="entry name" value="PreATP-grasp_dom_sf"/>
</dbReference>
<dbReference type="InterPro" id="IPR005862">
    <property type="entry name" value="PurT"/>
</dbReference>
<dbReference type="InterPro" id="IPR054350">
    <property type="entry name" value="PurT/PurK_preATP-grasp"/>
</dbReference>
<dbReference type="InterPro" id="IPR048740">
    <property type="entry name" value="PurT_C"/>
</dbReference>
<dbReference type="InterPro" id="IPR011054">
    <property type="entry name" value="Rudment_hybrid_motif"/>
</dbReference>
<dbReference type="NCBIfam" id="NF006766">
    <property type="entry name" value="PRK09288.1"/>
    <property type="match status" value="1"/>
</dbReference>
<dbReference type="NCBIfam" id="TIGR01142">
    <property type="entry name" value="purT"/>
    <property type="match status" value="1"/>
</dbReference>
<dbReference type="PANTHER" id="PTHR43055">
    <property type="entry name" value="FORMATE-DEPENDENT PHOSPHORIBOSYLGLYCINAMIDE FORMYLTRANSFERASE"/>
    <property type="match status" value="1"/>
</dbReference>
<dbReference type="PANTHER" id="PTHR43055:SF1">
    <property type="entry name" value="FORMATE-DEPENDENT PHOSPHORIBOSYLGLYCINAMIDE FORMYLTRANSFERASE"/>
    <property type="match status" value="1"/>
</dbReference>
<dbReference type="Pfam" id="PF02222">
    <property type="entry name" value="ATP-grasp"/>
    <property type="match status" value="1"/>
</dbReference>
<dbReference type="Pfam" id="PF21244">
    <property type="entry name" value="PurT_C"/>
    <property type="match status" value="1"/>
</dbReference>
<dbReference type="Pfam" id="PF22660">
    <property type="entry name" value="RS_preATP-grasp-like"/>
    <property type="match status" value="1"/>
</dbReference>
<dbReference type="SUPFAM" id="SSF56059">
    <property type="entry name" value="Glutathione synthetase ATP-binding domain-like"/>
    <property type="match status" value="1"/>
</dbReference>
<dbReference type="SUPFAM" id="SSF52440">
    <property type="entry name" value="PreATP-grasp domain"/>
    <property type="match status" value="1"/>
</dbReference>
<dbReference type="SUPFAM" id="SSF51246">
    <property type="entry name" value="Rudiment single hybrid motif"/>
    <property type="match status" value="1"/>
</dbReference>
<dbReference type="PROSITE" id="PS50975">
    <property type="entry name" value="ATP_GRASP"/>
    <property type="match status" value="1"/>
</dbReference>
<name>PURT_SYNY3</name>
<organism>
    <name type="scientific">Synechocystis sp. (strain ATCC 27184 / PCC 6803 / Kazusa)</name>
    <dbReference type="NCBI Taxonomy" id="1111708"/>
    <lineage>
        <taxon>Bacteria</taxon>
        <taxon>Bacillati</taxon>
        <taxon>Cyanobacteriota</taxon>
        <taxon>Cyanophyceae</taxon>
        <taxon>Synechococcales</taxon>
        <taxon>Merismopediaceae</taxon>
        <taxon>Synechocystis</taxon>
    </lineage>
</organism>
<proteinExistence type="inferred from homology"/>
<feature type="chain" id="PRO_0000074958" description="Formate-dependent phosphoribosylglycinamide formyltransferase">
    <location>
        <begin position="1"/>
        <end position="391"/>
    </location>
</feature>
<feature type="domain" description="ATP-grasp" evidence="1">
    <location>
        <begin position="115"/>
        <end position="305"/>
    </location>
</feature>
<feature type="binding site" evidence="1">
    <location>
        <begin position="18"/>
        <end position="19"/>
    </location>
    <ligand>
        <name>N(1)-(5-phospho-beta-D-ribosyl)glycinamide</name>
        <dbReference type="ChEBI" id="CHEBI:143788"/>
    </ligand>
</feature>
<feature type="binding site" evidence="1">
    <location>
        <position position="78"/>
    </location>
    <ligand>
        <name>N(1)-(5-phospho-beta-D-ribosyl)glycinamide</name>
        <dbReference type="ChEBI" id="CHEBI:143788"/>
    </ligand>
</feature>
<feature type="binding site" evidence="1">
    <location>
        <position position="110"/>
    </location>
    <ligand>
        <name>ATP</name>
        <dbReference type="ChEBI" id="CHEBI:30616"/>
    </ligand>
</feature>
<feature type="binding site" evidence="1">
    <location>
        <position position="151"/>
    </location>
    <ligand>
        <name>ATP</name>
        <dbReference type="ChEBI" id="CHEBI:30616"/>
    </ligand>
</feature>
<feature type="binding site" evidence="1">
    <location>
        <begin position="156"/>
        <end position="161"/>
    </location>
    <ligand>
        <name>ATP</name>
        <dbReference type="ChEBI" id="CHEBI:30616"/>
    </ligand>
</feature>
<feature type="binding site" evidence="1">
    <location>
        <begin position="191"/>
        <end position="194"/>
    </location>
    <ligand>
        <name>ATP</name>
        <dbReference type="ChEBI" id="CHEBI:30616"/>
    </ligand>
</feature>
<feature type="binding site" evidence="1">
    <location>
        <position position="199"/>
    </location>
    <ligand>
        <name>ATP</name>
        <dbReference type="ChEBI" id="CHEBI:30616"/>
    </ligand>
</feature>
<feature type="binding site" evidence="1">
    <location>
        <position position="264"/>
    </location>
    <ligand>
        <name>Mg(2+)</name>
        <dbReference type="ChEBI" id="CHEBI:18420"/>
    </ligand>
</feature>
<feature type="binding site" evidence="1">
    <location>
        <position position="276"/>
    </location>
    <ligand>
        <name>Mg(2+)</name>
        <dbReference type="ChEBI" id="CHEBI:18420"/>
    </ligand>
</feature>
<feature type="binding site" evidence="1">
    <location>
        <position position="283"/>
    </location>
    <ligand>
        <name>N(1)-(5-phospho-beta-D-ribosyl)glycinamide</name>
        <dbReference type="ChEBI" id="CHEBI:143788"/>
    </ligand>
</feature>
<feature type="binding site" evidence="1">
    <location>
        <position position="353"/>
    </location>
    <ligand>
        <name>N(1)-(5-phospho-beta-D-ribosyl)glycinamide</name>
        <dbReference type="ChEBI" id="CHEBI:143788"/>
    </ligand>
</feature>
<feature type="binding site" evidence="1">
    <location>
        <begin position="360"/>
        <end position="361"/>
    </location>
    <ligand>
        <name>N(1)-(5-phospho-beta-D-ribosyl)glycinamide</name>
        <dbReference type="ChEBI" id="CHEBI:143788"/>
    </ligand>
</feature>
<comment type="function">
    <text evidence="1">Involved in the de novo purine biosynthesis. Catalyzes the transfer of formate to 5-phospho-ribosyl-glycinamide (GAR), producing 5-phospho-ribosyl-N-formylglycinamide (FGAR). Formate is provided by PurU via hydrolysis of 10-formyl-tetrahydrofolate.</text>
</comment>
<comment type="catalytic activity">
    <reaction evidence="1">
        <text>N(1)-(5-phospho-beta-D-ribosyl)glycinamide + formate + ATP = N(2)-formyl-N(1)-(5-phospho-beta-D-ribosyl)glycinamide + ADP + phosphate + H(+)</text>
        <dbReference type="Rhea" id="RHEA:24829"/>
        <dbReference type="ChEBI" id="CHEBI:15378"/>
        <dbReference type="ChEBI" id="CHEBI:15740"/>
        <dbReference type="ChEBI" id="CHEBI:30616"/>
        <dbReference type="ChEBI" id="CHEBI:43474"/>
        <dbReference type="ChEBI" id="CHEBI:143788"/>
        <dbReference type="ChEBI" id="CHEBI:147286"/>
        <dbReference type="ChEBI" id="CHEBI:456216"/>
        <dbReference type="EC" id="6.3.1.21"/>
    </reaction>
    <physiologicalReaction direction="left-to-right" evidence="1">
        <dbReference type="Rhea" id="RHEA:24830"/>
    </physiologicalReaction>
</comment>
<comment type="pathway">
    <text evidence="1">Purine metabolism; IMP biosynthesis via de novo pathway; N(2)-formyl-N(1)-(5-phospho-D-ribosyl)glycinamide from N(1)-(5-phospho-D-ribosyl)glycinamide (formate route): step 1/1.</text>
</comment>
<comment type="subunit">
    <text evidence="1">Homodimer.</text>
</comment>
<comment type="similarity">
    <text evidence="1">Belongs to the PurK/PurT family.</text>
</comment>
<accession>Q55336</accession>
<evidence type="ECO:0000255" key="1">
    <source>
        <dbReference type="HAMAP-Rule" id="MF_01643"/>
    </source>
</evidence>